<evidence type="ECO:0000250" key="1"/>
<evidence type="ECO:0000305" key="2"/>
<keyword id="KW-0521">NADP</keyword>
<keyword id="KW-0560">Oxidoreductase</keyword>
<keyword id="KW-0566">Pantothenate biosynthesis</keyword>
<keyword id="KW-1185">Reference proteome</keyword>
<accession>F4KIN4</accession>
<dbReference type="EC" id="1.1.1.169"/>
<dbReference type="EMBL" id="AC019012">
    <property type="status" value="NOT_ANNOTATED_CDS"/>
    <property type="molecule type" value="Genomic_DNA"/>
</dbReference>
<dbReference type="EMBL" id="CP002688">
    <property type="protein sequence ID" value="AED93907.1"/>
    <property type="molecule type" value="Genomic_DNA"/>
</dbReference>
<dbReference type="RefSeq" id="NP_198327.1">
    <property type="nucleotide sequence ID" value="NM_122867.1"/>
</dbReference>
<dbReference type="SMR" id="F4KIN4"/>
<dbReference type="FunCoup" id="F4KIN4">
    <property type="interactions" value="71"/>
</dbReference>
<dbReference type="STRING" id="3702.F4KIN4"/>
<dbReference type="PaxDb" id="3702-AT5G34780.1"/>
<dbReference type="EnsemblPlants" id="AT5G34780.1">
    <property type="protein sequence ID" value="AT5G34780.1"/>
    <property type="gene ID" value="AT5G34780"/>
</dbReference>
<dbReference type="GeneID" id="833376"/>
<dbReference type="Gramene" id="AT5G34780.1">
    <property type="protein sequence ID" value="AT5G34780.1"/>
    <property type="gene ID" value="AT5G34780"/>
</dbReference>
<dbReference type="KEGG" id="ath:AT5G34780"/>
<dbReference type="Araport" id="AT5G34780"/>
<dbReference type="TAIR" id="AT5G34780"/>
<dbReference type="eggNOG" id="KOG0048">
    <property type="taxonomic scope" value="Eukaryota"/>
</dbReference>
<dbReference type="eggNOG" id="KOG1182">
    <property type="taxonomic scope" value="Eukaryota"/>
</dbReference>
<dbReference type="HOGENOM" id="CLU_759423_0_0_1"/>
<dbReference type="InParanoid" id="F4KIN4"/>
<dbReference type="PhylomeDB" id="F4KIN4"/>
<dbReference type="UniPathway" id="UPA00028">
    <property type="reaction ID" value="UER00004"/>
</dbReference>
<dbReference type="PRO" id="PR:F4KIN4"/>
<dbReference type="Proteomes" id="UP000006548">
    <property type="component" value="Chromosome 5"/>
</dbReference>
<dbReference type="ExpressionAtlas" id="F4KIN4">
    <property type="expression patterns" value="baseline and differential"/>
</dbReference>
<dbReference type="GO" id="GO:0008677">
    <property type="term" value="F:2-dehydropantoate 2-reductase activity"/>
    <property type="evidence" value="ECO:0000304"/>
    <property type="project" value="TAIR"/>
</dbReference>
<dbReference type="GO" id="GO:0016624">
    <property type="term" value="F:oxidoreductase activity, acting on the aldehyde or oxo group of donors, disulfide as acceptor"/>
    <property type="evidence" value="ECO:0007669"/>
    <property type="project" value="InterPro"/>
</dbReference>
<dbReference type="GO" id="GO:0015940">
    <property type="term" value="P:pantothenate biosynthetic process"/>
    <property type="evidence" value="ECO:0000304"/>
    <property type="project" value="TAIR"/>
</dbReference>
<dbReference type="CDD" id="cd02000">
    <property type="entry name" value="TPP_E1_PDC_ADC_BCADC"/>
    <property type="match status" value="1"/>
</dbReference>
<dbReference type="Gene3D" id="3.40.50.970">
    <property type="match status" value="1"/>
</dbReference>
<dbReference type="InterPro" id="IPR050771">
    <property type="entry name" value="Alpha-ketoacid_DH_E1_comp"/>
</dbReference>
<dbReference type="InterPro" id="IPR001017">
    <property type="entry name" value="DH_E1"/>
</dbReference>
<dbReference type="InterPro" id="IPR029061">
    <property type="entry name" value="THDP-binding"/>
</dbReference>
<dbReference type="PANTHER" id="PTHR43380">
    <property type="entry name" value="2-OXOISOVALERATE DEHYDROGENASE SUBUNIT ALPHA, MITOCHONDRIAL"/>
    <property type="match status" value="1"/>
</dbReference>
<dbReference type="PANTHER" id="PTHR43380:SF1">
    <property type="entry name" value="2-OXOISOVALERATE DEHYDROGENASE SUBUNIT ALPHA, MITOCHONDRIAL"/>
    <property type="match status" value="1"/>
</dbReference>
<dbReference type="Pfam" id="PF00676">
    <property type="entry name" value="E1_dh"/>
    <property type="match status" value="1"/>
</dbReference>
<dbReference type="SUPFAM" id="SSF52518">
    <property type="entry name" value="Thiamin diphosphate-binding fold (THDP-binding)"/>
    <property type="match status" value="1"/>
</dbReference>
<reference key="1">
    <citation type="journal article" date="2000" name="Nature">
        <title>Sequence and analysis of chromosome 5 of the plant Arabidopsis thaliana.</title>
        <authorList>
            <person name="Tabata S."/>
            <person name="Kaneko T."/>
            <person name="Nakamura Y."/>
            <person name="Kotani H."/>
            <person name="Kato T."/>
            <person name="Asamizu E."/>
            <person name="Miyajima N."/>
            <person name="Sasamoto S."/>
            <person name="Kimura T."/>
            <person name="Hosouchi T."/>
            <person name="Kawashima K."/>
            <person name="Kohara M."/>
            <person name="Matsumoto M."/>
            <person name="Matsuno A."/>
            <person name="Muraki A."/>
            <person name="Nakayama S."/>
            <person name="Nakazaki N."/>
            <person name="Naruo K."/>
            <person name="Okumura S."/>
            <person name="Shinpo S."/>
            <person name="Takeuchi C."/>
            <person name="Wada T."/>
            <person name="Watanabe A."/>
            <person name="Yamada M."/>
            <person name="Yasuda M."/>
            <person name="Sato S."/>
            <person name="de la Bastide M."/>
            <person name="Huang E."/>
            <person name="Spiegel L."/>
            <person name="Gnoj L."/>
            <person name="O'Shaughnessy A."/>
            <person name="Preston R."/>
            <person name="Habermann K."/>
            <person name="Murray J."/>
            <person name="Johnson D."/>
            <person name="Rohlfing T."/>
            <person name="Nelson J."/>
            <person name="Stoneking T."/>
            <person name="Pepin K."/>
            <person name="Spieth J."/>
            <person name="Sekhon M."/>
            <person name="Armstrong J."/>
            <person name="Becker M."/>
            <person name="Belter E."/>
            <person name="Cordum H."/>
            <person name="Cordes M."/>
            <person name="Courtney L."/>
            <person name="Courtney W."/>
            <person name="Dante M."/>
            <person name="Du H."/>
            <person name="Edwards J."/>
            <person name="Fryman J."/>
            <person name="Haakensen B."/>
            <person name="Lamar E."/>
            <person name="Latreille P."/>
            <person name="Leonard S."/>
            <person name="Meyer R."/>
            <person name="Mulvaney E."/>
            <person name="Ozersky P."/>
            <person name="Riley A."/>
            <person name="Strowmatt C."/>
            <person name="Wagner-McPherson C."/>
            <person name="Wollam A."/>
            <person name="Yoakum M."/>
            <person name="Bell M."/>
            <person name="Dedhia N."/>
            <person name="Parnell L."/>
            <person name="Shah R."/>
            <person name="Rodriguez M."/>
            <person name="Hoon See L."/>
            <person name="Vil D."/>
            <person name="Baker J."/>
            <person name="Kirchoff K."/>
            <person name="Toth K."/>
            <person name="King L."/>
            <person name="Bahret A."/>
            <person name="Miller B."/>
            <person name="Marra M.A."/>
            <person name="Martienssen R."/>
            <person name="McCombie W.R."/>
            <person name="Wilson R.K."/>
            <person name="Murphy G."/>
            <person name="Bancroft I."/>
            <person name="Volckaert G."/>
            <person name="Wambutt R."/>
            <person name="Duesterhoeft A."/>
            <person name="Stiekema W."/>
            <person name="Pohl T."/>
            <person name="Entian K.-D."/>
            <person name="Terryn N."/>
            <person name="Hartley N."/>
            <person name="Bent E."/>
            <person name="Johnson S."/>
            <person name="Langham S.-A."/>
            <person name="McCullagh B."/>
            <person name="Robben J."/>
            <person name="Grymonprez B."/>
            <person name="Zimmermann W."/>
            <person name="Ramsperger U."/>
            <person name="Wedler H."/>
            <person name="Balke K."/>
            <person name="Wedler E."/>
            <person name="Peters S."/>
            <person name="van Staveren M."/>
            <person name="Dirkse W."/>
            <person name="Mooijman P."/>
            <person name="Klein Lankhorst R."/>
            <person name="Weitzenegger T."/>
            <person name="Bothe G."/>
            <person name="Rose M."/>
            <person name="Hauf J."/>
            <person name="Berneiser S."/>
            <person name="Hempel S."/>
            <person name="Feldpausch M."/>
            <person name="Lamberth S."/>
            <person name="Villarroel R."/>
            <person name="Gielen J."/>
            <person name="Ardiles W."/>
            <person name="Bents O."/>
            <person name="Lemcke K."/>
            <person name="Kolesov G."/>
            <person name="Mayer K.F.X."/>
            <person name="Rudd S."/>
            <person name="Schoof H."/>
            <person name="Schueller C."/>
            <person name="Zaccaria P."/>
            <person name="Mewes H.-W."/>
            <person name="Bevan M."/>
            <person name="Fransz P.F."/>
        </authorList>
    </citation>
    <scope>NUCLEOTIDE SEQUENCE [LARGE SCALE GENOMIC DNA]</scope>
    <source>
        <strain>cv. Columbia</strain>
    </source>
</reference>
<reference key="2">
    <citation type="journal article" date="2017" name="Plant J.">
        <title>Araport11: a complete reannotation of the Arabidopsis thaliana reference genome.</title>
        <authorList>
            <person name="Cheng C.Y."/>
            <person name="Krishnakumar V."/>
            <person name="Chan A.P."/>
            <person name="Thibaud-Nissen F."/>
            <person name="Schobel S."/>
            <person name="Town C.D."/>
        </authorList>
    </citation>
    <scope>GENOME REANNOTATION</scope>
    <source>
        <strain>cv. Columbia</strain>
    </source>
</reference>
<proteinExistence type="inferred from homology"/>
<name>PANE_ARATH</name>
<gene>
    <name type="primary">KPR</name>
    <name type="synonym">PANE</name>
    <name type="ordered locus">At5g34780</name>
    <name type="ORF">T3J11</name>
</gene>
<feature type="chain" id="PRO_0000429570" description="Putative 2-dehydropantoate 2-reductase">
    <location>
        <begin position="1"/>
        <end position="365"/>
    </location>
</feature>
<protein>
    <recommendedName>
        <fullName>Putative 2-dehydropantoate 2-reductase</fullName>
        <ecNumber>1.1.1.169</ecNumber>
    </recommendedName>
    <alternativeName>
        <fullName>Ketopantoate reductase</fullName>
        <shortName>KPA reductase</shortName>
    </alternativeName>
</protein>
<sequence length="365" mass="41601">MESRCKKGYFRLAVIGLSKAKDCWEKNACAVTFIGDGGTSEGDFHAGLNFAAVMEAPVVFICRNNGWAISTHISEQFRSDGIVVKGQAYGIRSIRVDGNDALAVYSAVCSAREMAVTEQRPVLIEMMIYRVGHHSTSDDSTKYRAADEIQYWKMSRNSVNRFRKSVEDNGWWSEEDESKLRSNARKQLLQAIQAAEKWEKQPLTELFNDVYDVKPKNLEEEELGLKELIEKQPQDYMMLKELIPNWILGIGTLALRYDFQETLFNGWHAIAELQQLKLKIKLNSLLNDQADTESLKAARNSALNVIQAMIIHLVLTLKGRFSLPLTEETVRFNEPIQLNQNMVKDGGYTAELFPIRKEEQGEVRR</sequence>
<organism>
    <name type="scientific">Arabidopsis thaliana</name>
    <name type="common">Mouse-ear cress</name>
    <dbReference type="NCBI Taxonomy" id="3702"/>
    <lineage>
        <taxon>Eukaryota</taxon>
        <taxon>Viridiplantae</taxon>
        <taxon>Streptophyta</taxon>
        <taxon>Embryophyta</taxon>
        <taxon>Tracheophyta</taxon>
        <taxon>Spermatophyta</taxon>
        <taxon>Magnoliopsida</taxon>
        <taxon>eudicotyledons</taxon>
        <taxon>Gunneridae</taxon>
        <taxon>Pentapetalae</taxon>
        <taxon>rosids</taxon>
        <taxon>malvids</taxon>
        <taxon>Brassicales</taxon>
        <taxon>Brassicaceae</taxon>
        <taxon>Camelineae</taxon>
        <taxon>Arabidopsis</taxon>
    </lineage>
</organism>
<comment type="function">
    <text evidence="1">Catalyzes the NADPH-dependent reduction of ketopantoate into pantoic acid.</text>
</comment>
<comment type="catalytic activity">
    <reaction>
        <text>(R)-pantoate + NADP(+) = 2-dehydropantoate + NADPH + H(+)</text>
        <dbReference type="Rhea" id="RHEA:16233"/>
        <dbReference type="ChEBI" id="CHEBI:11561"/>
        <dbReference type="ChEBI" id="CHEBI:15378"/>
        <dbReference type="ChEBI" id="CHEBI:15980"/>
        <dbReference type="ChEBI" id="CHEBI:57783"/>
        <dbReference type="ChEBI" id="CHEBI:58349"/>
        <dbReference type="EC" id="1.1.1.169"/>
    </reaction>
</comment>
<comment type="pathway">
    <text>Cofactor biosynthesis; (R)-pantothenate biosynthesis; (R)-pantoate from 3-methyl-2-oxobutanoate: step 2/2.</text>
</comment>
<comment type="similarity">
    <text evidence="2">Belongs to the ketopantoate reductase family.</text>
</comment>